<evidence type="ECO:0000255" key="1">
    <source>
        <dbReference type="HAMAP-Rule" id="MF_00169"/>
    </source>
</evidence>
<protein>
    <recommendedName>
        <fullName evidence="1">3-dehydroquinate dehydratase</fullName>
        <shortName evidence="1">3-dehydroquinase</shortName>
        <ecNumber evidence="1">4.2.1.10</ecNumber>
    </recommendedName>
    <alternativeName>
        <fullName evidence="1">Type II DHQase</fullName>
    </alternativeName>
</protein>
<dbReference type="EC" id="4.2.1.10" evidence="1"/>
<dbReference type="EMBL" id="AP009389">
    <property type="protein sequence ID" value="BAF59341.1"/>
    <property type="molecule type" value="Genomic_DNA"/>
</dbReference>
<dbReference type="SMR" id="A5D337"/>
<dbReference type="STRING" id="370438.PTH_1160"/>
<dbReference type="KEGG" id="pth:PTH_1160"/>
<dbReference type="eggNOG" id="COG0757">
    <property type="taxonomic scope" value="Bacteria"/>
</dbReference>
<dbReference type="HOGENOM" id="CLU_090968_1_0_9"/>
<dbReference type="UniPathway" id="UPA00053">
    <property type="reaction ID" value="UER00086"/>
</dbReference>
<dbReference type="Proteomes" id="UP000006556">
    <property type="component" value="Chromosome"/>
</dbReference>
<dbReference type="GO" id="GO:0003855">
    <property type="term" value="F:3-dehydroquinate dehydratase activity"/>
    <property type="evidence" value="ECO:0007669"/>
    <property type="project" value="UniProtKB-UniRule"/>
</dbReference>
<dbReference type="GO" id="GO:0008652">
    <property type="term" value="P:amino acid biosynthetic process"/>
    <property type="evidence" value="ECO:0007669"/>
    <property type="project" value="UniProtKB-KW"/>
</dbReference>
<dbReference type="GO" id="GO:0009073">
    <property type="term" value="P:aromatic amino acid family biosynthetic process"/>
    <property type="evidence" value="ECO:0007669"/>
    <property type="project" value="UniProtKB-KW"/>
</dbReference>
<dbReference type="GO" id="GO:0009423">
    <property type="term" value="P:chorismate biosynthetic process"/>
    <property type="evidence" value="ECO:0007669"/>
    <property type="project" value="UniProtKB-UniRule"/>
</dbReference>
<dbReference type="GO" id="GO:0019631">
    <property type="term" value="P:quinate catabolic process"/>
    <property type="evidence" value="ECO:0007669"/>
    <property type="project" value="TreeGrafter"/>
</dbReference>
<dbReference type="CDD" id="cd00466">
    <property type="entry name" value="DHQase_II"/>
    <property type="match status" value="1"/>
</dbReference>
<dbReference type="Gene3D" id="3.40.50.9100">
    <property type="entry name" value="Dehydroquinase, class II"/>
    <property type="match status" value="1"/>
</dbReference>
<dbReference type="HAMAP" id="MF_00169">
    <property type="entry name" value="AroQ"/>
    <property type="match status" value="1"/>
</dbReference>
<dbReference type="InterPro" id="IPR001874">
    <property type="entry name" value="DHquinase_II"/>
</dbReference>
<dbReference type="InterPro" id="IPR018509">
    <property type="entry name" value="DHquinase_II_CS"/>
</dbReference>
<dbReference type="InterPro" id="IPR036441">
    <property type="entry name" value="DHquinase_II_sf"/>
</dbReference>
<dbReference type="NCBIfam" id="TIGR01088">
    <property type="entry name" value="aroQ"/>
    <property type="match status" value="1"/>
</dbReference>
<dbReference type="NCBIfam" id="NF003805">
    <property type="entry name" value="PRK05395.1-2"/>
    <property type="match status" value="1"/>
</dbReference>
<dbReference type="NCBIfam" id="NF003806">
    <property type="entry name" value="PRK05395.1-3"/>
    <property type="match status" value="1"/>
</dbReference>
<dbReference type="NCBIfam" id="NF003807">
    <property type="entry name" value="PRK05395.1-4"/>
    <property type="match status" value="1"/>
</dbReference>
<dbReference type="PANTHER" id="PTHR21272">
    <property type="entry name" value="CATABOLIC 3-DEHYDROQUINASE"/>
    <property type="match status" value="1"/>
</dbReference>
<dbReference type="PANTHER" id="PTHR21272:SF3">
    <property type="entry name" value="CATABOLIC 3-DEHYDROQUINASE"/>
    <property type="match status" value="1"/>
</dbReference>
<dbReference type="Pfam" id="PF01220">
    <property type="entry name" value="DHquinase_II"/>
    <property type="match status" value="1"/>
</dbReference>
<dbReference type="PIRSF" id="PIRSF001399">
    <property type="entry name" value="DHquinase_II"/>
    <property type="match status" value="1"/>
</dbReference>
<dbReference type="SUPFAM" id="SSF52304">
    <property type="entry name" value="Type II 3-dehydroquinate dehydratase"/>
    <property type="match status" value="1"/>
</dbReference>
<dbReference type="PROSITE" id="PS01029">
    <property type="entry name" value="DEHYDROQUINASE_II"/>
    <property type="match status" value="1"/>
</dbReference>
<sequence>MKIMVLHGPNLNLLGKREPSVYGSVTLEEINQKLAELAGELGVEICCKQSNSEGELVDLLHRAAEEADAVVFNPGAFTHYSYALRDAVSAIGIPTIEVHLSNIYSREDFRKHSVIAPVASGHICGMGVTGYLLALRAAAALAGT</sequence>
<gene>
    <name evidence="1" type="primary">aroQ</name>
    <name type="ordered locus">PTH_1160</name>
</gene>
<comment type="function">
    <text evidence="1">Catalyzes a trans-dehydration via an enolate intermediate.</text>
</comment>
<comment type="catalytic activity">
    <reaction evidence="1">
        <text>3-dehydroquinate = 3-dehydroshikimate + H2O</text>
        <dbReference type="Rhea" id="RHEA:21096"/>
        <dbReference type="ChEBI" id="CHEBI:15377"/>
        <dbReference type="ChEBI" id="CHEBI:16630"/>
        <dbReference type="ChEBI" id="CHEBI:32364"/>
        <dbReference type="EC" id="4.2.1.10"/>
    </reaction>
</comment>
<comment type="pathway">
    <text evidence="1">Metabolic intermediate biosynthesis; chorismate biosynthesis; chorismate from D-erythrose 4-phosphate and phosphoenolpyruvate: step 3/7.</text>
</comment>
<comment type="subunit">
    <text evidence="1">Homododecamer.</text>
</comment>
<comment type="similarity">
    <text evidence="1">Belongs to the type-II 3-dehydroquinase family.</text>
</comment>
<reference key="1">
    <citation type="journal article" date="2008" name="Genome Res.">
        <title>The genome of Pelotomaculum thermopropionicum reveals niche-associated evolution in anaerobic microbiota.</title>
        <authorList>
            <person name="Kosaka T."/>
            <person name="Kato S."/>
            <person name="Shimoyama T."/>
            <person name="Ishii S."/>
            <person name="Abe T."/>
            <person name="Watanabe K."/>
        </authorList>
    </citation>
    <scope>NUCLEOTIDE SEQUENCE [LARGE SCALE GENOMIC DNA]</scope>
    <source>
        <strain>DSM 13744 / JCM 10971 / SI</strain>
    </source>
</reference>
<name>AROQ_PELTS</name>
<feature type="chain" id="PRO_1000077051" description="3-dehydroquinate dehydratase">
    <location>
        <begin position="1"/>
        <end position="144"/>
    </location>
</feature>
<feature type="active site" description="Proton acceptor" evidence="1">
    <location>
        <position position="22"/>
    </location>
</feature>
<feature type="active site" description="Proton donor" evidence="1">
    <location>
        <position position="99"/>
    </location>
</feature>
<feature type="binding site" evidence="1">
    <location>
        <position position="73"/>
    </location>
    <ligand>
        <name>substrate</name>
    </ligand>
</feature>
<feature type="binding site" evidence="1">
    <location>
        <position position="79"/>
    </location>
    <ligand>
        <name>substrate</name>
    </ligand>
</feature>
<feature type="binding site" evidence="1">
    <location>
        <position position="86"/>
    </location>
    <ligand>
        <name>substrate</name>
    </ligand>
</feature>
<feature type="binding site" evidence="1">
    <location>
        <begin position="100"/>
        <end position="101"/>
    </location>
    <ligand>
        <name>substrate</name>
    </ligand>
</feature>
<feature type="binding site" evidence="1">
    <location>
        <position position="110"/>
    </location>
    <ligand>
        <name>substrate</name>
    </ligand>
</feature>
<feature type="site" description="Transition state stabilizer" evidence="1">
    <location>
        <position position="17"/>
    </location>
</feature>
<organism>
    <name type="scientific">Pelotomaculum thermopropionicum (strain DSM 13744 / JCM 10971 / SI)</name>
    <dbReference type="NCBI Taxonomy" id="370438"/>
    <lineage>
        <taxon>Bacteria</taxon>
        <taxon>Bacillati</taxon>
        <taxon>Bacillota</taxon>
        <taxon>Clostridia</taxon>
        <taxon>Eubacteriales</taxon>
        <taxon>Desulfotomaculaceae</taxon>
        <taxon>Pelotomaculum</taxon>
    </lineage>
</organism>
<proteinExistence type="inferred from homology"/>
<accession>A5D337</accession>
<keyword id="KW-0028">Amino-acid biosynthesis</keyword>
<keyword id="KW-0057">Aromatic amino acid biosynthesis</keyword>
<keyword id="KW-0456">Lyase</keyword>
<keyword id="KW-1185">Reference proteome</keyword>